<sequence>MKEMDERKQEGELHLLGGSTVYKQDYAPEVLEAFTNKHQGNDYWVRFNCPEFTSLCPITGQPDFATIHIDYIPDVKMVESKSLKLYLFSFRNHGAFHEDCVNIIMKDLIKLMDPKYIEITGIFTPRGGISIYPYCNYGRPNTKFEQLAEKRLFDHNQ</sequence>
<protein>
    <recommendedName>
        <fullName evidence="1">NADPH-dependent 7-cyano-7-deazaguanine reductase</fullName>
        <ecNumber evidence="1">1.7.1.13</ecNumber>
    </recommendedName>
    <alternativeName>
        <fullName evidence="1">7-cyano-7-carbaguanine reductase</fullName>
    </alternativeName>
    <alternativeName>
        <fullName evidence="1">NADPH-dependent nitrile oxidoreductase</fullName>
    </alternativeName>
    <alternativeName>
        <fullName evidence="1">PreQ(0) reductase</fullName>
    </alternativeName>
</protein>
<name>QUEF_PARD8</name>
<feature type="chain" id="PRO_1000213096" description="NADPH-dependent 7-cyano-7-deazaguanine reductase">
    <location>
        <begin position="1"/>
        <end position="157"/>
    </location>
</feature>
<feature type="active site" description="Thioimide intermediate" evidence="1">
    <location>
        <position position="56"/>
    </location>
</feature>
<feature type="active site" description="Proton donor" evidence="1">
    <location>
        <position position="63"/>
    </location>
</feature>
<feature type="binding site" evidence="1">
    <location>
        <begin position="78"/>
        <end position="80"/>
    </location>
    <ligand>
        <name>substrate</name>
    </ligand>
</feature>
<feature type="binding site" evidence="1">
    <location>
        <begin position="97"/>
        <end position="98"/>
    </location>
    <ligand>
        <name>substrate</name>
    </ligand>
</feature>
<proteinExistence type="inferred from homology"/>
<reference key="1">
    <citation type="journal article" date="2007" name="PLoS Biol.">
        <title>Evolution of symbiotic bacteria in the distal human intestine.</title>
        <authorList>
            <person name="Xu J."/>
            <person name="Mahowald M.A."/>
            <person name="Ley R.E."/>
            <person name="Lozupone C.A."/>
            <person name="Hamady M."/>
            <person name="Martens E.C."/>
            <person name="Henrissat B."/>
            <person name="Coutinho P.M."/>
            <person name="Minx P."/>
            <person name="Latreille P."/>
            <person name="Cordum H."/>
            <person name="Van Brunt A."/>
            <person name="Kim K."/>
            <person name="Fulton R.S."/>
            <person name="Fulton L.A."/>
            <person name="Clifton S.W."/>
            <person name="Wilson R.K."/>
            <person name="Knight R.D."/>
            <person name="Gordon J.I."/>
        </authorList>
    </citation>
    <scope>NUCLEOTIDE SEQUENCE [LARGE SCALE GENOMIC DNA]</scope>
    <source>
        <strain>ATCC 8503 / DSM 20701 / CIP 104284 / JCM 5825 / NCTC 11152</strain>
    </source>
</reference>
<organism>
    <name type="scientific">Parabacteroides distasonis (strain ATCC 8503 / DSM 20701 / CIP 104284 / JCM 5825 / NCTC 11152)</name>
    <dbReference type="NCBI Taxonomy" id="435591"/>
    <lineage>
        <taxon>Bacteria</taxon>
        <taxon>Pseudomonadati</taxon>
        <taxon>Bacteroidota</taxon>
        <taxon>Bacteroidia</taxon>
        <taxon>Bacteroidales</taxon>
        <taxon>Tannerellaceae</taxon>
        <taxon>Parabacteroides</taxon>
    </lineage>
</organism>
<comment type="function">
    <text evidence="1">Catalyzes the NADPH-dependent reduction of 7-cyano-7-deazaguanine (preQ0) to 7-aminomethyl-7-deazaguanine (preQ1).</text>
</comment>
<comment type="catalytic activity">
    <reaction evidence="1">
        <text>7-aminomethyl-7-carbaguanine + 2 NADP(+) = 7-cyano-7-deazaguanine + 2 NADPH + 3 H(+)</text>
        <dbReference type="Rhea" id="RHEA:13409"/>
        <dbReference type="ChEBI" id="CHEBI:15378"/>
        <dbReference type="ChEBI" id="CHEBI:45075"/>
        <dbReference type="ChEBI" id="CHEBI:57783"/>
        <dbReference type="ChEBI" id="CHEBI:58349"/>
        <dbReference type="ChEBI" id="CHEBI:58703"/>
        <dbReference type="EC" id="1.7.1.13"/>
    </reaction>
</comment>
<comment type="pathway">
    <text evidence="1">tRNA modification; tRNA-queuosine biosynthesis.</text>
</comment>
<comment type="subcellular location">
    <subcellularLocation>
        <location evidence="1">Cytoplasm</location>
    </subcellularLocation>
</comment>
<comment type="similarity">
    <text evidence="1">Belongs to the GTP cyclohydrolase I family. QueF type 1 subfamily.</text>
</comment>
<keyword id="KW-0963">Cytoplasm</keyword>
<keyword id="KW-0521">NADP</keyword>
<keyword id="KW-0560">Oxidoreductase</keyword>
<keyword id="KW-0671">Queuosine biosynthesis</keyword>
<keyword id="KW-1185">Reference proteome</keyword>
<evidence type="ECO:0000255" key="1">
    <source>
        <dbReference type="HAMAP-Rule" id="MF_00818"/>
    </source>
</evidence>
<dbReference type="EC" id="1.7.1.13" evidence="1"/>
<dbReference type="EMBL" id="CP000140">
    <property type="protein sequence ID" value="ABR45594.1"/>
    <property type="molecule type" value="Genomic_DNA"/>
</dbReference>
<dbReference type="SMR" id="A6LIT0"/>
<dbReference type="STRING" id="435591.BDI_3913"/>
<dbReference type="PaxDb" id="435591-BDI_3913"/>
<dbReference type="KEGG" id="pdi:BDI_3913"/>
<dbReference type="eggNOG" id="COG0780">
    <property type="taxonomic scope" value="Bacteria"/>
</dbReference>
<dbReference type="HOGENOM" id="CLU_102489_0_1_10"/>
<dbReference type="UniPathway" id="UPA00392"/>
<dbReference type="Proteomes" id="UP000000566">
    <property type="component" value="Chromosome"/>
</dbReference>
<dbReference type="GO" id="GO:0005737">
    <property type="term" value="C:cytoplasm"/>
    <property type="evidence" value="ECO:0007669"/>
    <property type="project" value="UniProtKB-SubCell"/>
</dbReference>
<dbReference type="GO" id="GO:0033739">
    <property type="term" value="F:preQ1 synthase activity"/>
    <property type="evidence" value="ECO:0007669"/>
    <property type="project" value="UniProtKB-UniRule"/>
</dbReference>
<dbReference type="GO" id="GO:0008616">
    <property type="term" value="P:queuosine biosynthetic process"/>
    <property type="evidence" value="ECO:0007669"/>
    <property type="project" value="UniProtKB-UniRule"/>
</dbReference>
<dbReference type="GO" id="GO:0006400">
    <property type="term" value="P:tRNA modification"/>
    <property type="evidence" value="ECO:0007669"/>
    <property type="project" value="UniProtKB-UniRule"/>
</dbReference>
<dbReference type="Gene3D" id="3.30.1130.10">
    <property type="match status" value="1"/>
</dbReference>
<dbReference type="HAMAP" id="MF_00818">
    <property type="entry name" value="QueF_type1"/>
    <property type="match status" value="1"/>
</dbReference>
<dbReference type="InterPro" id="IPR043133">
    <property type="entry name" value="GTP-CH-I_C/QueF"/>
</dbReference>
<dbReference type="InterPro" id="IPR050084">
    <property type="entry name" value="NADPH_dep_7-cyano-7-deazaG_red"/>
</dbReference>
<dbReference type="InterPro" id="IPR029500">
    <property type="entry name" value="QueF"/>
</dbReference>
<dbReference type="InterPro" id="IPR016856">
    <property type="entry name" value="QueF_type1"/>
</dbReference>
<dbReference type="NCBIfam" id="TIGR03139">
    <property type="entry name" value="QueF-II"/>
    <property type="match status" value="1"/>
</dbReference>
<dbReference type="PANTHER" id="PTHR34354">
    <property type="entry name" value="NADPH-DEPENDENT 7-CYANO-7-DEAZAGUANINE REDUCTASE"/>
    <property type="match status" value="1"/>
</dbReference>
<dbReference type="PANTHER" id="PTHR34354:SF1">
    <property type="entry name" value="NADPH-DEPENDENT 7-CYANO-7-DEAZAGUANINE REDUCTASE"/>
    <property type="match status" value="1"/>
</dbReference>
<dbReference type="Pfam" id="PF14489">
    <property type="entry name" value="QueF"/>
    <property type="match status" value="1"/>
</dbReference>
<dbReference type="PIRSF" id="PIRSF027377">
    <property type="entry name" value="Nitrile_oxidored_QueF"/>
    <property type="match status" value="1"/>
</dbReference>
<dbReference type="SUPFAM" id="SSF55620">
    <property type="entry name" value="Tetrahydrobiopterin biosynthesis enzymes-like"/>
    <property type="match status" value="1"/>
</dbReference>
<gene>
    <name evidence="1" type="primary">queF</name>
    <name type="ordered locus">BDI_3913</name>
</gene>
<accession>A6LIT0</accession>